<sequence>MMHIKSLPHAHAAATAMSSNCDIVIVAAQPQTTIANNNNNETVTQATHPAHMAAVQQQQQQQQQQQQQHHQQQQQQSSGPPSVPPPPTELPLPFQMHLSGISAEAHSAAQAAAMAAAQAAAAQAAAAEQQQPPPPTSHLTHLTTHSPTTIHSEHYLANGHSEHPGEGNAAVGVGGAVREPEKPFHCTVCDRRFRQLSTLTNHVKIHTGEKPYKCNVCDKTFRQSSTLTNHLKIHTGEKPYNCNFCPKHFRQLSTLANHVKIHTGEKPFECVICKKQFRQSSTLNNHIKIHVMDKVYVPVKIKTEEDEG</sequence>
<gene>
    <name type="primary">Aef1</name>
    <name type="ORF">CG5683</name>
</gene>
<comment type="function">
    <text evidence="3">Transcriptional repressor that binds specifically to fat body-specific enhancers, namely the adult ADH enhancer (AAE) and the enhancer that controls yolk protein gene expression.</text>
</comment>
<comment type="subcellular location">
    <subcellularLocation>
        <location evidence="3">Nucleus</location>
    </subcellularLocation>
</comment>
<comment type="tissue specificity">
    <text evidence="3">Found in all tissues examined including the ovary and the fat body.</text>
</comment>
<comment type="developmental stage">
    <text evidence="3">Higher levels are found in third-instar larvae and in adults.</text>
</comment>
<name>AEF1_DROME</name>
<reference key="1">
    <citation type="journal article" date="1992" name="Mol. Cell. Biol.">
        <title>Drosophila transcriptional repressor protein that binds specifically to negative control elements in fat body enhancers.</title>
        <authorList>
            <person name="Falb D."/>
            <person name="Maniatis T."/>
        </authorList>
    </citation>
    <scope>NUCLEOTIDE SEQUENCE [MRNA]</scope>
    <scope>FUNCTION</scope>
    <scope>SUBCELLULAR LOCATION</scope>
    <scope>TISSUE SPECIFICITY</scope>
    <scope>DEVELOPMENTAL STAGE</scope>
    <source>
        <tissue>Ovary</tissue>
    </source>
</reference>
<reference key="2">
    <citation type="journal article" date="2000" name="Science">
        <title>The genome sequence of Drosophila melanogaster.</title>
        <authorList>
            <person name="Adams M.D."/>
            <person name="Celniker S.E."/>
            <person name="Holt R.A."/>
            <person name="Evans C.A."/>
            <person name="Gocayne J.D."/>
            <person name="Amanatides P.G."/>
            <person name="Scherer S.E."/>
            <person name="Li P.W."/>
            <person name="Hoskins R.A."/>
            <person name="Galle R.F."/>
            <person name="George R.A."/>
            <person name="Lewis S.E."/>
            <person name="Richards S."/>
            <person name="Ashburner M."/>
            <person name="Henderson S.N."/>
            <person name="Sutton G.G."/>
            <person name="Wortman J.R."/>
            <person name="Yandell M.D."/>
            <person name="Zhang Q."/>
            <person name="Chen L.X."/>
            <person name="Brandon R.C."/>
            <person name="Rogers Y.-H.C."/>
            <person name="Blazej R.G."/>
            <person name="Champe M."/>
            <person name="Pfeiffer B.D."/>
            <person name="Wan K.H."/>
            <person name="Doyle C."/>
            <person name="Baxter E.G."/>
            <person name="Helt G."/>
            <person name="Nelson C.R."/>
            <person name="Miklos G.L.G."/>
            <person name="Abril J.F."/>
            <person name="Agbayani A."/>
            <person name="An H.-J."/>
            <person name="Andrews-Pfannkoch C."/>
            <person name="Baldwin D."/>
            <person name="Ballew R.M."/>
            <person name="Basu A."/>
            <person name="Baxendale J."/>
            <person name="Bayraktaroglu L."/>
            <person name="Beasley E.M."/>
            <person name="Beeson K.Y."/>
            <person name="Benos P.V."/>
            <person name="Berman B.P."/>
            <person name="Bhandari D."/>
            <person name="Bolshakov S."/>
            <person name="Borkova D."/>
            <person name="Botchan M.R."/>
            <person name="Bouck J."/>
            <person name="Brokstein P."/>
            <person name="Brottier P."/>
            <person name="Burtis K.C."/>
            <person name="Busam D.A."/>
            <person name="Butler H."/>
            <person name="Cadieu E."/>
            <person name="Center A."/>
            <person name="Chandra I."/>
            <person name="Cherry J.M."/>
            <person name="Cawley S."/>
            <person name="Dahlke C."/>
            <person name="Davenport L.B."/>
            <person name="Davies P."/>
            <person name="de Pablos B."/>
            <person name="Delcher A."/>
            <person name="Deng Z."/>
            <person name="Mays A.D."/>
            <person name="Dew I."/>
            <person name="Dietz S.M."/>
            <person name="Dodson K."/>
            <person name="Doup L.E."/>
            <person name="Downes M."/>
            <person name="Dugan-Rocha S."/>
            <person name="Dunkov B.C."/>
            <person name="Dunn P."/>
            <person name="Durbin K.J."/>
            <person name="Evangelista C.C."/>
            <person name="Ferraz C."/>
            <person name="Ferriera S."/>
            <person name="Fleischmann W."/>
            <person name="Fosler C."/>
            <person name="Gabrielian A.E."/>
            <person name="Garg N.S."/>
            <person name="Gelbart W.M."/>
            <person name="Glasser K."/>
            <person name="Glodek A."/>
            <person name="Gong F."/>
            <person name="Gorrell J.H."/>
            <person name="Gu Z."/>
            <person name="Guan P."/>
            <person name="Harris M."/>
            <person name="Harris N.L."/>
            <person name="Harvey D.A."/>
            <person name="Heiman T.J."/>
            <person name="Hernandez J.R."/>
            <person name="Houck J."/>
            <person name="Hostin D."/>
            <person name="Houston K.A."/>
            <person name="Howland T.J."/>
            <person name="Wei M.-H."/>
            <person name="Ibegwam C."/>
            <person name="Jalali M."/>
            <person name="Kalush F."/>
            <person name="Karpen G.H."/>
            <person name="Ke Z."/>
            <person name="Kennison J.A."/>
            <person name="Ketchum K.A."/>
            <person name="Kimmel B.E."/>
            <person name="Kodira C.D."/>
            <person name="Kraft C.L."/>
            <person name="Kravitz S."/>
            <person name="Kulp D."/>
            <person name="Lai Z."/>
            <person name="Lasko P."/>
            <person name="Lei Y."/>
            <person name="Levitsky A.A."/>
            <person name="Li J.H."/>
            <person name="Li Z."/>
            <person name="Liang Y."/>
            <person name="Lin X."/>
            <person name="Liu X."/>
            <person name="Mattei B."/>
            <person name="McIntosh T.C."/>
            <person name="McLeod M.P."/>
            <person name="McPherson D."/>
            <person name="Merkulov G."/>
            <person name="Milshina N.V."/>
            <person name="Mobarry C."/>
            <person name="Morris J."/>
            <person name="Moshrefi A."/>
            <person name="Mount S.M."/>
            <person name="Moy M."/>
            <person name="Murphy B."/>
            <person name="Murphy L."/>
            <person name="Muzny D.M."/>
            <person name="Nelson D.L."/>
            <person name="Nelson D.R."/>
            <person name="Nelson K.A."/>
            <person name="Nixon K."/>
            <person name="Nusskern D.R."/>
            <person name="Pacleb J.M."/>
            <person name="Palazzolo M."/>
            <person name="Pittman G.S."/>
            <person name="Pan S."/>
            <person name="Pollard J."/>
            <person name="Puri V."/>
            <person name="Reese M.G."/>
            <person name="Reinert K."/>
            <person name="Remington K."/>
            <person name="Saunders R.D.C."/>
            <person name="Scheeler F."/>
            <person name="Shen H."/>
            <person name="Shue B.C."/>
            <person name="Siden-Kiamos I."/>
            <person name="Simpson M."/>
            <person name="Skupski M.P."/>
            <person name="Smith T.J."/>
            <person name="Spier E."/>
            <person name="Spradling A.C."/>
            <person name="Stapleton M."/>
            <person name="Strong R."/>
            <person name="Sun E."/>
            <person name="Svirskas R."/>
            <person name="Tector C."/>
            <person name="Turner R."/>
            <person name="Venter E."/>
            <person name="Wang A.H."/>
            <person name="Wang X."/>
            <person name="Wang Z.-Y."/>
            <person name="Wassarman D.A."/>
            <person name="Weinstock G.M."/>
            <person name="Weissenbach J."/>
            <person name="Williams S.M."/>
            <person name="Woodage T."/>
            <person name="Worley K.C."/>
            <person name="Wu D."/>
            <person name="Yang S."/>
            <person name="Yao Q.A."/>
            <person name="Ye J."/>
            <person name="Yeh R.-F."/>
            <person name="Zaveri J.S."/>
            <person name="Zhan M."/>
            <person name="Zhang G."/>
            <person name="Zhao Q."/>
            <person name="Zheng L."/>
            <person name="Zheng X.H."/>
            <person name="Zhong F.N."/>
            <person name="Zhong W."/>
            <person name="Zhou X."/>
            <person name="Zhu S.C."/>
            <person name="Zhu X."/>
            <person name="Smith H.O."/>
            <person name="Gibbs R.A."/>
            <person name="Myers E.W."/>
            <person name="Rubin G.M."/>
            <person name="Venter J.C."/>
        </authorList>
    </citation>
    <scope>NUCLEOTIDE SEQUENCE [LARGE SCALE GENOMIC DNA]</scope>
    <source>
        <strain>Berkeley</strain>
    </source>
</reference>
<reference key="3">
    <citation type="journal article" date="2002" name="Genome Biol.">
        <title>Annotation of the Drosophila melanogaster euchromatic genome: a systematic review.</title>
        <authorList>
            <person name="Misra S."/>
            <person name="Crosby M.A."/>
            <person name="Mungall C.J."/>
            <person name="Matthews B.B."/>
            <person name="Campbell K.S."/>
            <person name="Hradecky P."/>
            <person name="Huang Y."/>
            <person name="Kaminker J.S."/>
            <person name="Millburn G.H."/>
            <person name="Prochnik S.E."/>
            <person name="Smith C.D."/>
            <person name="Tupy J.L."/>
            <person name="Whitfield E.J."/>
            <person name="Bayraktaroglu L."/>
            <person name="Berman B.P."/>
            <person name="Bettencourt B.R."/>
            <person name="Celniker S.E."/>
            <person name="de Grey A.D.N.J."/>
            <person name="Drysdale R.A."/>
            <person name="Harris N.L."/>
            <person name="Richter J."/>
            <person name="Russo S."/>
            <person name="Schroeder A.J."/>
            <person name="Shu S.Q."/>
            <person name="Stapleton M."/>
            <person name="Yamada C."/>
            <person name="Ashburner M."/>
            <person name="Gelbart W.M."/>
            <person name="Rubin G.M."/>
            <person name="Lewis S.E."/>
        </authorList>
    </citation>
    <scope>GENOME REANNOTATION</scope>
    <source>
        <strain>Berkeley</strain>
    </source>
</reference>
<reference key="4">
    <citation type="journal article" date="2002" name="Genome Biol.">
        <title>A Drosophila full-length cDNA resource.</title>
        <authorList>
            <person name="Stapleton M."/>
            <person name="Carlson J.W."/>
            <person name="Brokstein P."/>
            <person name="Yu C."/>
            <person name="Champe M."/>
            <person name="George R.A."/>
            <person name="Guarin H."/>
            <person name="Kronmiller B."/>
            <person name="Pacleb J.M."/>
            <person name="Park S."/>
            <person name="Wan K.H."/>
            <person name="Rubin G.M."/>
            <person name="Celniker S.E."/>
        </authorList>
    </citation>
    <scope>NUCLEOTIDE SEQUENCE [LARGE SCALE MRNA]</scope>
    <source>
        <strain>Berkeley</strain>
        <tissue>Embryo</tissue>
    </source>
</reference>
<evidence type="ECO:0000255" key="1">
    <source>
        <dbReference type="PROSITE-ProRule" id="PRU00042"/>
    </source>
</evidence>
<evidence type="ECO:0000256" key="2">
    <source>
        <dbReference type="SAM" id="MobiDB-lite"/>
    </source>
</evidence>
<evidence type="ECO:0000269" key="3">
    <source>
    </source>
</evidence>
<protein>
    <recommendedName>
        <fullName>Adult enhancer factor 1</fullName>
        <shortName>AEF-1</shortName>
    </recommendedName>
</protein>
<accession>P39413</accession>
<accession>Q0E8C4</accession>
<accession>Q9VP37</accession>
<feature type="chain" id="PRO_0000046908" description="Adult enhancer factor 1">
    <location>
        <begin position="1"/>
        <end position="308"/>
    </location>
</feature>
<feature type="zinc finger region" description="C2H2-type 1" evidence="1">
    <location>
        <begin position="184"/>
        <end position="206"/>
    </location>
</feature>
<feature type="zinc finger region" description="C2H2-type 2" evidence="1">
    <location>
        <begin position="212"/>
        <end position="234"/>
    </location>
</feature>
<feature type="zinc finger region" description="C2H2-type 3" evidence="1">
    <location>
        <begin position="240"/>
        <end position="262"/>
    </location>
</feature>
<feature type="zinc finger region" description="C2H2-type 4" evidence="1">
    <location>
        <begin position="268"/>
        <end position="290"/>
    </location>
</feature>
<feature type="region of interest" description="Disordered" evidence="2">
    <location>
        <begin position="50"/>
        <end position="94"/>
    </location>
</feature>
<feature type="region of interest" description="Disordered" evidence="2">
    <location>
        <begin position="123"/>
        <end position="143"/>
    </location>
</feature>
<feature type="compositionally biased region" description="Low complexity" evidence="2">
    <location>
        <begin position="56"/>
        <end position="76"/>
    </location>
</feature>
<feature type="compositionally biased region" description="Pro residues" evidence="2">
    <location>
        <begin position="81"/>
        <end position="90"/>
    </location>
</feature>
<dbReference type="EMBL" id="M90755">
    <property type="status" value="NOT_ANNOTATED_CDS"/>
    <property type="molecule type" value="mRNA"/>
</dbReference>
<dbReference type="EMBL" id="AE014296">
    <property type="protein sequence ID" value="AAF51721.1"/>
    <property type="molecule type" value="Genomic_DNA"/>
</dbReference>
<dbReference type="EMBL" id="AY060435">
    <property type="protein sequence ID" value="AAL25474.1"/>
    <property type="molecule type" value="mRNA"/>
</dbReference>
<dbReference type="PIR" id="A44496">
    <property type="entry name" value="A44496"/>
</dbReference>
<dbReference type="RefSeq" id="NP_524200.1">
    <property type="nucleotide sequence ID" value="NM_079476.3"/>
</dbReference>
<dbReference type="RefSeq" id="NP_730630.1">
    <property type="nucleotide sequence ID" value="NM_168903.3"/>
</dbReference>
<dbReference type="RefSeq" id="NP_730631.1">
    <property type="nucleotide sequence ID" value="NM_168904.3"/>
</dbReference>
<dbReference type="SMR" id="P39413"/>
<dbReference type="BioGRID" id="65617">
    <property type="interactions" value="8"/>
</dbReference>
<dbReference type="DIP" id="DIP-22241N"/>
<dbReference type="FunCoup" id="P39413">
    <property type="interactions" value="18"/>
</dbReference>
<dbReference type="IntAct" id="P39413">
    <property type="interactions" value="4"/>
</dbReference>
<dbReference type="STRING" id="7227.FBpp0303189"/>
<dbReference type="PaxDb" id="7227-FBpp0078005"/>
<dbReference type="DNASU" id="40370"/>
<dbReference type="EnsemblMetazoa" id="FBtr0078348">
    <property type="protein sequence ID" value="FBpp0078004"/>
    <property type="gene ID" value="FBgn0005694"/>
</dbReference>
<dbReference type="EnsemblMetazoa" id="FBtr0078349">
    <property type="protein sequence ID" value="FBpp0078005"/>
    <property type="gene ID" value="FBgn0005694"/>
</dbReference>
<dbReference type="EnsemblMetazoa" id="FBtr0078350">
    <property type="protein sequence ID" value="FBpp0078006"/>
    <property type="gene ID" value="FBgn0005694"/>
</dbReference>
<dbReference type="GeneID" id="40370"/>
<dbReference type="KEGG" id="dme:Dmel_CG5683"/>
<dbReference type="AGR" id="FB:FBgn0005694"/>
<dbReference type="CTD" id="40370"/>
<dbReference type="FlyBase" id="FBgn0005694">
    <property type="gene designation" value="Aef1"/>
</dbReference>
<dbReference type="VEuPathDB" id="VectorBase:FBgn0005694"/>
<dbReference type="eggNOG" id="KOG1721">
    <property type="taxonomic scope" value="Eukaryota"/>
</dbReference>
<dbReference type="HOGENOM" id="CLU_048648_0_0_1"/>
<dbReference type="InParanoid" id="P39413"/>
<dbReference type="OMA" id="EAPKRCA"/>
<dbReference type="OrthoDB" id="40579at2759"/>
<dbReference type="PhylomeDB" id="P39413"/>
<dbReference type="SignaLink" id="P39413"/>
<dbReference type="BioGRID-ORCS" id="40370">
    <property type="hits" value="0 hits in 1 CRISPR screen"/>
</dbReference>
<dbReference type="GenomeRNAi" id="40370"/>
<dbReference type="PRO" id="PR:P39413"/>
<dbReference type="Proteomes" id="UP000000803">
    <property type="component" value="Chromosome 3L"/>
</dbReference>
<dbReference type="Bgee" id="FBgn0005694">
    <property type="expression patterns" value="Expressed in posterior terminal follicle cell in ovary and 211 other cell types or tissues"/>
</dbReference>
<dbReference type="ExpressionAtlas" id="P39413">
    <property type="expression patterns" value="baseline and differential"/>
</dbReference>
<dbReference type="GO" id="GO:0005634">
    <property type="term" value="C:nucleus"/>
    <property type="evidence" value="ECO:0000318"/>
    <property type="project" value="GO_Central"/>
</dbReference>
<dbReference type="GO" id="GO:0000981">
    <property type="term" value="F:DNA-binding transcription factor activity, RNA polymerase II-specific"/>
    <property type="evidence" value="ECO:0000318"/>
    <property type="project" value="GO_Central"/>
</dbReference>
<dbReference type="GO" id="GO:0000977">
    <property type="term" value="F:RNA polymerase II transcription regulatory region sequence-specific DNA binding"/>
    <property type="evidence" value="ECO:0000318"/>
    <property type="project" value="GO_Central"/>
</dbReference>
<dbReference type="GO" id="GO:0008270">
    <property type="term" value="F:zinc ion binding"/>
    <property type="evidence" value="ECO:0007669"/>
    <property type="project" value="UniProtKB-KW"/>
</dbReference>
<dbReference type="GO" id="GO:0006357">
    <property type="term" value="P:regulation of transcription by RNA polymerase II"/>
    <property type="evidence" value="ECO:0000318"/>
    <property type="project" value="GO_Central"/>
</dbReference>
<dbReference type="FunFam" id="3.30.160.60:FF:000621">
    <property type="entry name" value="FLT3-interacting zinc finger 1"/>
    <property type="match status" value="1"/>
</dbReference>
<dbReference type="FunFam" id="3.30.160.60:FF:002104">
    <property type="entry name" value="Si:ch211-266d19.4"/>
    <property type="match status" value="1"/>
</dbReference>
<dbReference type="FunFam" id="3.30.160.60:FF:000557">
    <property type="entry name" value="zinc finger and SCAN domain-containing protein 29"/>
    <property type="match status" value="1"/>
</dbReference>
<dbReference type="FunFam" id="3.30.160.60:FF:000016">
    <property type="entry name" value="zinc finger protein 37 homolog"/>
    <property type="match status" value="1"/>
</dbReference>
<dbReference type="Gene3D" id="3.30.160.60">
    <property type="entry name" value="Classic Zinc Finger"/>
    <property type="match status" value="4"/>
</dbReference>
<dbReference type="InterPro" id="IPR036236">
    <property type="entry name" value="Znf_C2H2_sf"/>
</dbReference>
<dbReference type="InterPro" id="IPR013087">
    <property type="entry name" value="Znf_C2H2_type"/>
</dbReference>
<dbReference type="PANTHER" id="PTHR23235">
    <property type="entry name" value="KRUEPPEL-LIKE TRANSCRIPTION FACTOR"/>
    <property type="match status" value="1"/>
</dbReference>
<dbReference type="PANTHER" id="PTHR23235:SF142">
    <property type="entry name" value="ZINC FINGER PROTEIN 384"/>
    <property type="match status" value="1"/>
</dbReference>
<dbReference type="Pfam" id="PF00096">
    <property type="entry name" value="zf-C2H2"/>
    <property type="match status" value="4"/>
</dbReference>
<dbReference type="SMART" id="SM00355">
    <property type="entry name" value="ZnF_C2H2"/>
    <property type="match status" value="4"/>
</dbReference>
<dbReference type="SUPFAM" id="SSF57667">
    <property type="entry name" value="beta-beta-alpha zinc fingers"/>
    <property type="match status" value="2"/>
</dbReference>
<dbReference type="PROSITE" id="PS00028">
    <property type="entry name" value="ZINC_FINGER_C2H2_1"/>
    <property type="match status" value="4"/>
</dbReference>
<dbReference type="PROSITE" id="PS50157">
    <property type="entry name" value="ZINC_FINGER_C2H2_2"/>
    <property type="match status" value="4"/>
</dbReference>
<organism>
    <name type="scientific">Drosophila melanogaster</name>
    <name type="common">Fruit fly</name>
    <dbReference type="NCBI Taxonomy" id="7227"/>
    <lineage>
        <taxon>Eukaryota</taxon>
        <taxon>Metazoa</taxon>
        <taxon>Ecdysozoa</taxon>
        <taxon>Arthropoda</taxon>
        <taxon>Hexapoda</taxon>
        <taxon>Insecta</taxon>
        <taxon>Pterygota</taxon>
        <taxon>Neoptera</taxon>
        <taxon>Endopterygota</taxon>
        <taxon>Diptera</taxon>
        <taxon>Brachycera</taxon>
        <taxon>Muscomorpha</taxon>
        <taxon>Ephydroidea</taxon>
        <taxon>Drosophilidae</taxon>
        <taxon>Drosophila</taxon>
        <taxon>Sophophora</taxon>
    </lineage>
</organism>
<proteinExistence type="evidence at transcript level"/>
<keyword id="KW-0238">DNA-binding</keyword>
<keyword id="KW-0479">Metal-binding</keyword>
<keyword id="KW-0539">Nucleus</keyword>
<keyword id="KW-1185">Reference proteome</keyword>
<keyword id="KW-0677">Repeat</keyword>
<keyword id="KW-0678">Repressor</keyword>
<keyword id="KW-0804">Transcription</keyword>
<keyword id="KW-0805">Transcription regulation</keyword>
<keyword id="KW-0862">Zinc</keyword>
<keyword id="KW-0863">Zinc-finger</keyword>